<name>RTN3_PONAB</name>
<sequence>MAEPSAATQSPSISSSSSGAEPSAPGGGGSPGACPALGTKSCSSSCAVHDLIFWRDVKKTGFVFGTTLIMLLSLAAFSVISVVSYLILALLSVTISFRIYKSVIQAVQKSEEGHPFKAYLDVDITLSSEAFHNYMNAAMVHINRALKLIIRLFLVEDLVDSLKLAVFMWLMTYVGAVFNGITLLILAELLIFSVPIVYEKYKTQIDHYVGIARDQTKSIVEKIQAKLPGIAKKKAE</sequence>
<reference key="1">
    <citation type="submission" date="2004-11" db="EMBL/GenBank/DDBJ databases">
        <authorList>
            <consortium name="The German cDNA consortium"/>
        </authorList>
    </citation>
    <scope>NUCLEOTIDE SEQUENCE [LARGE SCALE MRNA]</scope>
    <source>
        <tissue>Brain cortex</tissue>
    </source>
</reference>
<gene>
    <name type="primary">RTN3</name>
</gene>
<protein>
    <recommendedName>
        <fullName>Reticulon-3</fullName>
    </recommendedName>
</protein>
<evidence type="ECO:0000250" key="1"/>
<evidence type="ECO:0000250" key="2">
    <source>
        <dbReference type="UniProtKB" id="O95197"/>
    </source>
</evidence>
<evidence type="ECO:0000250" key="3">
    <source>
        <dbReference type="UniProtKB" id="Q9ES97"/>
    </source>
</evidence>
<evidence type="ECO:0000255" key="4"/>
<evidence type="ECO:0000255" key="5">
    <source>
        <dbReference type="PROSITE-ProRule" id="PRU00170"/>
    </source>
</evidence>
<evidence type="ECO:0000256" key="6">
    <source>
        <dbReference type="SAM" id="MobiDB-lite"/>
    </source>
</evidence>
<proteinExistence type="evidence at transcript level"/>
<feature type="initiator methionine" description="Removed" evidence="2">
    <location>
        <position position="1"/>
    </location>
</feature>
<feature type="chain" id="PRO_0000280540" description="Reticulon-3">
    <location>
        <begin position="2"/>
        <end position="236"/>
    </location>
</feature>
<feature type="topological domain" description="Cytoplasmic" evidence="4">
    <location>
        <begin position="2"/>
        <end position="67"/>
    </location>
</feature>
<feature type="intramembrane region" description="Helical" evidence="4">
    <location>
        <begin position="68"/>
        <end position="91"/>
    </location>
</feature>
<feature type="topological domain" description="Cytoplasmic" evidence="4">
    <location>
        <begin position="92"/>
        <end position="151"/>
    </location>
</feature>
<feature type="intramembrane region" description="Helical" evidence="4">
    <location>
        <begin position="152"/>
        <end position="172"/>
    </location>
</feature>
<feature type="topological domain" description="Cytoplasmic" evidence="4">
    <location>
        <begin position="173"/>
        <end position="176"/>
    </location>
</feature>
<feature type="intramembrane region" description="Helical" evidence="4">
    <location>
        <begin position="177"/>
        <end position="197"/>
    </location>
</feature>
<feature type="topological domain" description="Cytoplasmic" evidence="4">
    <location>
        <begin position="198"/>
        <end position="236"/>
    </location>
</feature>
<feature type="domain" description="Reticulon" evidence="5">
    <location>
        <begin position="48"/>
        <end position="236"/>
    </location>
</feature>
<feature type="region of interest" description="Disordered" evidence="6">
    <location>
        <begin position="1"/>
        <end position="31"/>
    </location>
</feature>
<feature type="region of interest" description="Interaction with FADD" evidence="1">
    <location>
        <begin position="191"/>
        <end position="236"/>
    </location>
</feature>
<feature type="region of interest" description="Interaction with BACE1" evidence="1">
    <location>
        <begin position="204"/>
        <end position="206"/>
    </location>
</feature>
<feature type="compositionally biased region" description="Low complexity" evidence="6">
    <location>
        <begin position="1"/>
        <end position="24"/>
    </location>
</feature>
<feature type="modified residue" description="N-acetylalanine" evidence="2">
    <location>
        <position position="2"/>
    </location>
</feature>
<feature type="modified residue" description="Phosphoserine" evidence="2">
    <location>
        <position position="30"/>
    </location>
</feature>
<dbReference type="EMBL" id="CR858619">
    <property type="protein sequence ID" value="CAH90841.1"/>
    <property type="molecule type" value="mRNA"/>
</dbReference>
<dbReference type="RefSeq" id="NP_001125479.1">
    <property type="nucleotide sequence ID" value="NM_001132007.1"/>
</dbReference>
<dbReference type="RefSeq" id="XP_054934485.1">
    <property type="nucleotide sequence ID" value="XM_055078510.2"/>
</dbReference>
<dbReference type="SMR" id="Q5RBL9"/>
<dbReference type="STRING" id="9601.ENSPPYP00000003614"/>
<dbReference type="GeneID" id="100172388"/>
<dbReference type="eggNOG" id="KOG1792">
    <property type="taxonomic scope" value="Eukaryota"/>
</dbReference>
<dbReference type="HOGENOM" id="CLU_048580_1_0_1"/>
<dbReference type="InParanoid" id="Q5RBL9"/>
<dbReference type="Proteomes" id="UP000001595">
    <property type="component" value="Unplaced"/>
</dbReference>
<dbReference type="GO" id="GO:0005783">
    <property type="term" value="C:endoplasmic reticulum"/>
    <property type="evidence" value="ECO:0000250"/>
    <property type="project" value="UniProtKB"/>
</dbReference>
<dbReference type="GO" id="GO:0005789">
    <property type="term" value="C:endoplasmic reticulum membrane"/>
    <property type="evidence" value="ECO:0007669"/>
    <property type="project" value="UniProtKB-SubCell"/>
</dbReference>
<dbReference type="GO" id="GO:0005794">
    <property type="term" value="C:Golgi apparatus"/>
    <property type="evidence" value="ECO:0000250"/>
    <property type="project" value="UniProtKB"/>
</dbReference>
<dbReference type="GO" id="GO:0000139">
    <property type="term" value="C:Golgi membrane"/>
    <property type="evidence" value="ECO:0007669"/>
    <property type="project" value="UniProtKB-SubCell"/>
</dbReference>
<dbReference type="GO" id="GO:0043005">
    <property type="term" value="C:neuron projection"/>
    <property type="evidence" value="ECO:0007669"/>
    <property type="project" value="TreeGrafter"/>
</dbReference>
<dbReference type="GO" id="GO:0014069">
    <property type="term" value="C:postsynaptic density"/>
    <property type="evidence" value="ECO:0007669"/>
    <property type="project" value="TreeGrafter"/>
</dbReference>
<dbReference type="GO" id="GO:0006915">
    <property type="term" value="P:apoptotic process"/>
    <property type="evidence" value="ECO:0007669"/>
    <property type="project" value="UniProtKB-KW"/>
</dbReference>
<dbReference type="GO" id="GO:0007420">
    <property type="term" value="P:brain development"/>
    <property type="evidence" value="ECO:0007669"/>
    <property type="project" value="TreeGrafter"/>
</dbReference>
<dbReference type="GO" id="GO:0071787">
    <property type="term" value="P:endoplasmic reticulum tubular network formation"/>
    <property type="evidence" value="ECO:0007669"/>
    <property type="project" value="TreeGrafter"/>
</dbReference>
<dbReference type="GO" id="GO:1902430">
    <property type="term" value="P:negative regulation of amyloid-beta formation"/>
    <property type="evidence" value="ECO:0000250"/>
    <property type="project" value="UniProtKB"/>
</dbReference>
<dbReference type="GO" id="GO:0030182">
    <property type="term" value="P:neuron differentiation"/>
    <property type="evidence" value="ECO:0007669"/>
    <property type="project" value="TreeGrafter"/>
</dbReference>
<dbReference type="GO" id="GO:0016192">
    <property type="term" value="P:vesicle-mediated transport"/>
    <property type="evidence" value="ECO:0007669"/>
    <property type="project" value="UniProtKB-KW"/>
</dbReference>
<dbReference type="FunFam" id="1.20.5.2480:FF:000001">
    <property type="entry name" value="Reticulon"/>
    <property type="match status" value="1"/>
</dbReference>
<dbReference type="Gene3D" id="1.20.5.2480">
    <property type="match status" value="1"/>
</dbReference>
<dbReference type="InterPro" id="IPR003388">
    <property type="entry name" value="Reticulon"/>
</dbReference>
<dbReference type="InterPro" id="IPR046964">
    <property type="entry name" value="RTN1-4"/>
</dbReference>
<dbReference type="PANTHER" id="PTHR45799:SF4">
    <property type="entry name" value="RETICULON-3"/>
    <property type="match status" value="1"/>
</dbReference>
<dbReference type="PANTHER" id="PTHR45799">
    <property type="entry name" value="RETICULON-LIKE PROTEIN"/>
    <property type="match status" value="1"/>
</dbReference>
<dbReference type="Pfam" id="PF02453">
    <property type="entry name" value="Reticulon"/>
    <property type="match status" value="1"/>
</dbReference>
<dbReference type="PROSITE" id="PS50845">
    <property type="entry name" value="RETICULON"/>
    <property type="match status" value="1"/>
</dbReference>
<keyword id="KW-0007">Acetylation</keyword>
<keyword id="KW-0053">Apoptosis</keyword>
<keyword id="KW-0256">Endoplasmic reticulum</keyword>
<keyword id="KW-0931">ER-Golgi transport</keyword>
<keyword id="KW-0333">Golgi apparatus</keyword>
<keyword id="KW-0472">Membrane</keyword>
<keyword id="KW-0597">Phosphoprotein</keyword>
<keyword id="KW-1185">Reference proteome</keyword>
<keyword id="KW-0812">Transmembrane</keyword>
<keyword id="KW-1133">Transmembrane helix</keyword>
<keyword id="KW-0813">Transport</keyword>
<accession>Q5RBL9</accession>
<comment type="function">
    <text evidence="2">May be involved in membrane trafficking in the early secretory pathway. Inhibits BACE1 activity and amyloid precursor protein processing. May induce caspase-8 cascade and apoptosis. May favor BCL2 translocation to the mitochondria upon endoplasmic reticulum stress. Induces the formation of endoplasmic reticulum tubules. Acts also as an inflammation-resolving regulator by interacting with both TRIM25 and RIGI, subsequently impairing RIGI 'Lys-63'-linked polyubiquitination leading to IRF3 and NF-kappa-B inhibition.</text>
</comment>
<comment type="subunit">
    <text evidence="2 3">Homodimer. Interacts with RTN4. Interacts with BACE1, BACE2, BCL2 and FADD. Interacts with ATL1 and ATL2. Interacts with TMEM33. Interacts with ZFYVE27 and with KIF5A in a ZFYVE27-dependent manner. Interacts with RIGI. Interacts with TRIM25.</text>
</comment>
<comment type="subcellular location">
    <subcellularLocation>
        <location evidence="2">Endoplasmic reticulum membrane</location>
        <topology evidence="4">Multi-pass membrane protein</topology>
    </subcellularLocation>
    <subcellularLocation>
        <location evidence="2">Golgi apparatus membrane</location>
        <topology evidence="4">Multi-pass membrane protein</topology>
    </subcellularLocation>
</comment>
<organism>
    <name type="scientific">Pongo abelii</name>
    <name type="common">Sumatran orangutan</name>
    <name type="synonym">Pongo pygmaeus abelii</name>
    <dbReference type="NCBI Taxonomy" id="9601"/>
    <lineage>
        <taxon>Eukaryota</taxon>
        <taxon>Metazoa</taxon>
        <taxon>Chordata</taxon>
        <taxon>Craniata</taxon>
        <taxon>Vertebrata</taxon>
        <taxon>Euteleostomi</taxon>
        <taxon>Mammalia</taxon>
        <taxon>Eutheria</taxon>
        <taxon>Euarchontoglires</taxon>
        <taxon>Primates</taxon>
        <taxon>Haplorrhini</taxon>
        <taxon>Catarrhini</taxon>
        <taxon>Hominidae</taxon>
        <taxon>Pongo</taxon>
    </lineage>
</organism>